<accession>Q8N2H4</accession>
<accession>C9JFB3</accession>
<accession>E1P620</accession>
<accession>Q5QPU7</accession>
<accession>Q96SD8</accession>
<accession>Q9BQZ2</accession>
<accession>Q9BQZ4</accession>
<accession>Q9H1F7</accession>
<feature type="chain" id="PRO_0000213940" description="Protein SYS1 homolog">
    <location>
        <begin position="1"/>
        <end position="156"/>
    </location>
</feature>
<feature type="transmembrane region" description="Helical" evidence="1">
    <location>
        <begin position="13"/>
        <end position="33"/>
    </location>
</feature>
<feature type="transmembrane region" description="Helical" evidence="1">
    <location>
        <begin position="65"/>
        <end position="85"/>
    </location>
</feature>
<feature type="transmembrane region" description="Helical" evidence="1">
    <location>
        <begin position="91"/>
        <end position="111"/>
    </location>
</feature>
<feature type="transmembrane region" description="Helical" evidence="1">
    <location>
        <begin position="113"/>
        <end position="133"/>
    </location>
</feature>
<feature type="splice variant" id="VSP_044540" description="In isoform 2." evidence="3">
    <location>
        <begin position="77"/>
        <end position="156"/>
    </location>
</feature>
<sequence>MAGQFRSYVWDPLLILSQIVLMQTVYYGSLGLWLALVDGLVRSSPSLDQMFDAEILGFSTPPGRLSMMSFILNALTCALGLLYFIRRGKQCLDFTVTVHFFHLLGCWFYSSRFPSALTWWLVQAVCIALMAVIGEYLCMRTELKEIPLNSAPKSNV</sequence>
<proteinExistence type="evidence at protein level"/>
<dbReference type="EMBL" id="AL591714">
    <property type="protein sequence ID" value="CAC39448.1"/>
    <property type="status" value="ALT_INIT"/>
    <property type="molecule type" value="mRNA"/>
</dbReference>
<dbReference type="EMBL" id="AK075264">
    <property type="protein sequence ID" value="BAC11506.1"/>
    <property type="molecule type" value="mRNA"/>
</dbReference>
<dbReference type="EMBL" id="AK172738">
    <property type="status" value="NOT_ANNOTATED_CDS"/>
    <property type="molecule type" value="mRNA"/>
</dbReference>
<dbReference type="EMBL" id="AL021578">
    <property type="status" value="NOT_ANNOTATED_CDS"/>
    <property type="molecule type" value="Genomic_DNA"/>
</dbReference>
<dbReference type="EMBL" id="CH471077">
    <property type="protein sequence ID" value="EAW75847.1"/>
    <property type="molecule type" value="Genomic_DNA"/>
</dbReference>
<dbReference type="EMBL" id="CH471077">
    <property type="protein sequence ID" value="EAW75857.1"/>
    <property type="molecule type" value="Genomic_DNA"/>
</dbReference>
<dbReference type="EMBL" id="BC048286">
    <property type="protein sequence ID" value="AAH48286.1"/>
    <property type="molecule type" value="mRNA"/>
</dbReference>
<dbReference type="CCDS" id="CCDS13351.1">
    <molecule id="Q8N2H4-1"/>
</dbReference>
<dbReference type="CCDS" id="CCDS56192.1">
    <molecule id="Q8N2H4-2"/>
</dbReference>
<dbReference type="RefSeq" id="NP_001093261.1">
    <molecule id="Q8N2H4-2"/>
    <property type="nucleotide sequence ID" value="NM_001099791.3"/>
</dbReference>
<dbReference type="RefSeq" id="NP_001184058.1">
    <molecule id="Q8N2H4-1"/>
    <property type="nucleotide sequence ID" value="NM_001197129.2"/>
</dbReference>
<dbReference type="RefSeq" id="NP_291020.1">
    <molecule id="Q8N2H4-1"/>
    <property type="nucleotide sequence ID" value="NM_033542.4"/>
</dbReference>
<dbReference type="SMR" id="Q8N2H4"/>
<dbReference type="BioGRID" id="318199">
    <property type="interactions" value="38"/>
</dbReference>
<dbReference type="FunCoup" id="Q8N2H4">
    <property type="interactions" value="1309"/>
</dbReference>
<dbReference type="IntAct" id="Q8N2H4">
    <property type="interactions" value="25"/>
</dbReference>
<dbReference type="STRING" id="9606.ENSP00000243918"/>
<dbReference type="iPTMnet" id="Q8N2H4"/>
<dbReference type="PhosphoSitePlus" id="Q8N2H4"/>
<dbReference type="BioMuta" id="SYS1"/>
<dbReference type="DMDM" id="51316873"/>
<dbReference type="jPOST" id="Q8N2H4"/>
<dbReference type="MassIVE" id="Q8N2H4"/>
<dbReference type="PaxDb" id="9606-ENSP00000243918"/>
<dbReference type="PeptideAtlas" id="Q8N2H4"/>
<dbReference type="ProteomicsDB" id="71700">
    <molecule id="Q8N2H4-1"/>
</dbReference>
<dbReference type="ProteomicsDB" id="9962"/>
<dbReference type="Pumba" id="Q8N2H4"/>
<dbReference type="TopDownProteomics" id="Q8N2H4-1">
    <molecule id="Q8N2H4-1"/>
</dbReference>
<dbReference type="Antibodypedia" id="57552">
    <property type="antibodies" value="68 antibodies from 15 providers"/>
</dbReference>
<dbReference type="DNASU" id="90196"/>
<dbReference type="Ensembl" id="ENST00000243918.10">
    <molecule id="Q8N2H4-1"/>
    <property type="protein sequence ID" value="ENSP00000243918.5"/>
    <property type="gene ID" value="ENSG00000204070.10"/>
</dbReference>
<dbReference type="Ensembl" id="ENST00000372727.5">
    <molecule id="Q8N2H4-1"/>
    <property type="protein sequence ID" value="ENSP00000361812.1"/>
    <property type="gene ID" value="ENSG00000204070.10"/>
</dbReference>
<dbReference type="Ensembl" id="ENST00000426004.5">
    <molecule id="Q8N2H4-2"/>
    <property type="protein sequence ID" value="ENSP00000416506.1"/>
    <property type="gene ID" value="ENSG00000204070.10"/>
</dbReference>
<dbReference type="GeneID" id="90196"/>
<dbReference type="KEGG" id="hsa:90196"/>
<dbReference type="MANE-Select" id="ENST00000243918.10">
    <property type="protein sequence ID" value="ENSP00000243918.5"/>
    <property type="RefSeq nucleotide sequence ID" value="NM_033542.4"/>
    <property type="RefSeq protein sequence ID" value="NP_291020.1"/>
</dbReference>
<dbReference type="UCSC" id="uc002xnv.4">
    <molecule id="Q8N2H4-1"/>
    <property type="organism name" value="human"/>
</dbReference>
<dbReference type="AGR" id="HGNC:16162"/>
<dbReference type="CTD" id="90196"/>
<dbReference type="GeneCards" id="SYS1"/>
<dbReference type="HGNC" id="HGNC:16162">
    <property type="gene designation" value="SYS1"/>
</dbReference>
<dbReference type="HPA" id="ENSG00000204070">
    <property type="expression patterns" value="Low tissue specificity"/>
</dbReference>
<dbReference type="MIM" id="612979">
    <property type="type" value="gene"/>
</dbReference>
<dbReference type="neXtProt" id="NX_Q8N2H4"/>
<dbReference type="OpenTargets" id="ENSG00000204070"/>
<dbReference type="PharmGKB" id="PA162405119"/>
<dbReference type="VEuPathDB" id="HostDB:ENSG00000204070"/>
<dbReference type="eggNOG" id="KOG4697">
    <property type="taxonomic scope" value="Eukaryota"/>
</dbReference>
<dbReference type="GeneTree" id="ENSGT00940000154347"/>
<dbReference type="HOGENOM" id="CLU_081382_2_1_1"/>
<dbReference type="InParanoid" id="Q8N2H4"/>
<dbReference type="OMA" id="EYEMVGM"/>
<dbReference type="OrthoDB" id="542931at2759"/>
<dbReference type="PAN-GO" id="Q8N2H4">
    <property type="GO annotations" value="5 GO annotations based on evolutionary models"/>
</dbReference>
<dbReference type="PhylomeDB" id="Q8N2H4"/>
<dbReference type="TreeFam" id="TF105875"/>
<dbReference type="PathwayCommons" id="Q8N2H4"/>
<dbReference type="Reactome" id="R-HSA-6811440">
    <property type="pathway name" value="Retrograde transport at the Trans-Golgi-Network"/>
</dbReference>
<dbReference type="SignaLink" id="Q8N2H4"/>
<dbReference type="BioGRID-ORCS" id="90196">
    <property type="hits" value="692 hits in 1158 CRISPR screens"/>
</dbReference>
<dbReference type="GenomeRNAi" id="90196"/>
<dbReference type="Pharos" id="Q8N2H4">
    <property type="development level" value="Tbio"/>
</dbReference>
<dbReference type="PRO" id="PR:Q8N2H4"/>
<dbReference type="Proteomes" id="UP000005640">
    <property type="component" value="Chromosome 20"/>
</dbReference>
<dbReference type="RNAct" id="Q8N2H4">
    <property type="molecule type" value="protein"/>
</dbReference>
<dbReference type="Bgee" id="ENSG00000204070">
    <property type="expression patterns" value="Expressed in islet of Langerhans and 182 other cell types or tissues"/>
</dbReference>
<dbReference type="ExpressionAtlas" id="Q8N2H4">
    <property type="expression patterns" value="baseline and differential"/>
</dbReference>
<dbReference type="GO" id="GO:0005829">
    <property type="term" value="C:cytosol"/>
    <property type="evidence" value="ECO:0007669"/>
    <property type="project" value="GOC"/>
</dbReference>
<dbReference type="GO" id="GO:0000139">
    <property type="term" value="C:Golgi membrane"/>
    <property type="evidence" value="ECO:0000318"/>
    <property type="project" value="GO_Central"/>
</dbReference>
<dbReference type="GO" id="GO:0005802">
    <property type="term" value="C:trans-Golgi network"/>
    <property type="evidence" value="ECO:0000318"/>
    <property type="project" value="GO_Central"/>
</dbReference>
<dbReference type="GO" id="GO:0032588">
    <property type="term" value="C:trans-Golgi network membrane"/>
    <property type="evidence" value="ECO:0000304"/>
    <property type="project" value="Reactome"/>
</dbReference>
<dbReference type="GO" id="GO:0006895">
    <property type="term" value="P:Golgi to endosome transport"/>
    <property type="evidence" value="ECO:0000318"/>
    <property type="project" value="GO_Central"/>
</dbReference>
<dbReference type="GO" id="GO:0043001">
    <property type="term" value="P:Golgi to plasma membrane protein transport"/>
    <property type="evidence" value="ECO:0000318"/>
    <property type="project" value="GO_Central"/>
</dbReference>
<dbReference type="GO" id="GO:0034067">
    <property type="term" value="P:protein localization to Golgi apparatus"/>
    <property type="evidence" value="ECO:0000318"/>
    <property type="project" value="GO_Central"/>
</dbReference>
<dbReference type="InterPro" id="IPR016973">
    <property type="entry name" value="Integral_membrane_SYS1"/>
</dbReference>
<dbReference type="InterPro" id="IPR019185">
    <property type="entry name" value="Integral_membrane_SYS1-rel"/>
</dbReference>
<dbReference type="PANTHER" id="PTHR12952:SF0">
    <property type="entry name" value="PROTEIN SYS1 HOMOLOG"/>
    <property type="match status" value="1"/>
</dbReference>
<dbReference type="PANTHER" id="PTHR12952">
    <property type="entry name" value="SYS1"/>
    <property type="match status" value="1"/>
</dbReference>
<dbReference type="Pfam" id="PF09801">
    <property type="entry name" value="SYS1"/>
    <property type="match status" value="1"/>
</dbReference>
<dbReference type="PIRSF" id="PIRSF031402">
    <property type="entry name" value="SYS1_homologue"/>
    <property type="match status" value="1"/>
</dbReference>
<evidence type="ECO:0000255" key="1"/>
<evidence type="ECO:0000269" key="2">
    <source>
    </source>
</evidence>
<evidence type="ECO:0000303" key="3">
    <source>
    </source>
</evidence>
<evidence type="ECO:0000305" key="4"/>
<comment type="function">
    <text>Involved in protein trafficking. May serve as a receptor for ARFRP1.</text>
</comment>
<comment type="subunit">
    <text evidence="2">Interacts with ARFRP1.</text>
</comment>
<comment type="interaction">
    <interactant intactId="EBI-13075176">
        <id>Q8N2H4</id>
    </interactant>
    <interactant intactId="EBI-17953245">
        <id>Q6UXG8-3</id>
        <label>BTNL9</label>
    </interactant>
    <organismsDiffer>false</organismsDiffer>
    <experiments>3</experiments>
</comment>
<comment type="interaction">
    <interactant intactId="EBI-13075176">
        <id>Q8N2H4</id>
    </interactant>
    <interactant intactId="EBI-3915253">
        <id>Q15125</id>
        <label>EBP</label>
    </interactant>
    <organismsDiffer>false</organismsDiffer>
    <experiments>3</experiments>
</comment>
<comment type="interaction">
    <interactant intactId="EBI-13075176">
        <id>Q8N2H4</id>
    </interactant>
    <interactant intactId="EBI-11037623">
        <id>Q9NYP7</id>
        <label>ELOVL5</label>
    </interactant>
    <organismsDiffer>false</organismsDiffer>
    <experiments>3</experiments>
</comment>
<comment type="interaction">
    <interactant intactId="EBI-13075176">
        <id>Q8N2H4</id>
    </interactant>
    <interactant intactId="EBI-781551">
        <id>Q9Y282</id>
        <label>ERGIC3</label>
    </interactant>
    <organismsDiffer>false</organismsDiffer>
    <experiments>3</experiments>
</comment>
<comment type="interaction">
    <interactant intactId="EBI-13075176">
        <id>Q8N2H4</id>
    </interactant>
    <interactant intactId="EBI-1052304">
        <id>Q8NBQ5</id>
        <label>HSD17B11</label>
    </interactant>
    <organismsDiffer>false</organismsDiffer>
    <experiments>3</experiments>
</comment>
<comment type="interaction">
    <interactant intactId="EBI-13075176">
        <id>Q8N2H4</id>
    </interactant>
    <interactant intactId="EBI-1757512">
        <id>P26951</id>
        <label>IL3RA</label>
    </interactant>
    <organismsDiffer>false</organismsDiffer>
    <experiments>3</experiments>
</comment>
<comment type="interaction">
    <interactant intactId="EBI-13075176">
        <id>Q8N2H4</id>
    </interactant>
    <interactant intactId="EBI-17272405">
        <id>Q8N743</id>
        <label>KIR3DL3</label>
    </interactant>
    <organismsDiffer>false</organismsDiffer>
    <experiments>3</experiments>
</comment>
<comment type="interaction">
    <interactant intactId="EBI-13075176">
        <id>Q8N2H4</id>
    </interactant>
    <interactant intactId="EBI-2689785">
        <id>Q8NI22</id>
        <label>MCFD2</label>
    </interactant>
    <organismsDiffer>false</organismsDiffer>
    <experiments>3</experiments>
</comment>
<comment type="interaction">
    <interactant intactId="EBI-13075176">
        <id>Q8N2H4</id>
    </interactant>
    <interactant intactId="EBI-724754">
        <id>O14880</id>
        <label>MGST3</label>
    </interactant>
    <organismsDiffer>false</organismsDiffer>
    <experiments>3</experiments>
</comment>
<comment type="interaction">
    <interactant intactId="EBI-13075176">
        <id>Q8N2H4</id>
    </interactant>
    <interactant intactId="EBI-750085">
        <id>Q9Y676</id>
        <label>MRPS18B</label>
    </interactant>
    <organismsDiffer>false</organismsDiffer>
    <experiments>3</experiments>
</comment>
<comment type="interaction">
    <interactant intactId="EBI-13075176">
        <id>Q8N2H4</id>
    </interactant>
    <interactant intactId="EBI-3919694">
        <id>P15151</id>
        <label>PVR</label>
    </interactant>
    <organismsDiffer>false</organismsDiffer>
    <experiments>3</experiments>
</comment>
<comment type="interaction">
    <interactant intactId="EBI-13075176">
        <id>Q8N2H4</id>
    </interactant>
    <interactant intactId="EBI-727004">
        <id>O00560</id>
        <label>SDCBP</label>
    </interactant>
    <organismsDiffer>false</organismsDiffer>
    <experiments>3</experiments>
</comment>
<comment type="interaction">
    <interactant intactId="EBI-13075176">
        <id>Q8N2H4</id>
    </interactant>
    <interactant intactId="EBI-10262251">
        <id>Q8IWU4</id>
        <label>SLC30A8</label>
    </interactant>
    <organismsDiffer>false</organismsDiffer>
    <experiments>3</experiments>
</comment>
<comment type="interaction">
    <interactant intactId="EBI-13075176">
        <id>Q8N2H4</id>
    </interactant>
    <interactant intactId="EBI-17295964">
        <id>Q9NQQ7-3</id>
        <label>SLC35C2</label>
    </interactant>
    <organismsDiffer>false</organismsDiffer>
    <experiments>3</experiments>
</comment>
<comment type="interaction">
    <interactant intactId="EBI-13075176">
        <id>Q8N2H4</id>
    </interactant>
    <interactant intactId="EBI-6448756">
        <id>Q96DZ7</id>
        <label>TM4SF19</label>
    </interactant>
    <organismsDiffer>false</organismsDiffer>
    <experiments>3</experiments>
</comment>
<comment type="interaction">
    <interactant intactId="EBI-13075176">
        <id>Q8N2H4</id>
    </interactant>
    <interactant intactId="EBI-10314986">
        <id>Q9NWD8</id>
        <label>TMEM248</label>
    </interactant>
    <organismsDiffer>false</organismsDiffer>
    <experiments>3</experiments>
</comment>
<comment type="interaction">
    <interactant intactId="EBI-13075176">
        <id>Q8N2H4</id>
    </interactant>
    <interactant intactId="EBI-524131">
        <id>O43557</id>
        <label>TNFSF14</label>
    </interactant>
    <organismsDiffer>false</organismsDiffer>
    <experiments>3</experiments>
</comment>
<comment type="subcellular location">
    <subcellularLocation>
        <location evidence="2">Golgi apparatus membrane</location>
        <topology evidence="2">Multi-pass membrane protein</topology>
    </subcellularLocation>
</comment>
<comment type="alternative products">
    <event type="alternative splicing"/>
    <isoform>
        <id>Q8N2H4-1</id>
        <name>1</name>
        <sequence type="displayed"/>
    </isoform>
    <isoform>
        <id>Q8N2H4-2</id>
        <name>2</name>
        <sequence type="described" ref="VSP_044540"/>
    </isoform>
</comment>
<comment type="similarity">
    <text evidence="4">Belongs to the SYS1 family.</text>
</comment>
<comment type="sequence caution" evidence="4">
    <conflict type="erroneous initiation">
        <sequence resource="EMBL-CDS" id="CAC39448"/>
    </conflict>
</comment>
<reference key="1">
    <citation type="submission" date="2001-05" db="EMBL/GenBank/DDBJ databases">
        <authorList>
            <person name="Stavrides G.S."/>
            <person name="Huckle E.J."/>
            <person name="Deloukas P."/>
        </authorList>
    </citation>
    <scope>NUCLEOTIDE SEQUENCE [MRNA] (ISOFORM 1)</scope>
</reference>
<reference key="2">
    <citation type="journal article" date="2004" name="Nat. Genet.">
        <title>Complete sequencing and characterization of 21,243 full-length human cDNAs.</title>
        <authorList>
            <person name="Ota T."/>
            <person name="Suzuki Y."/>
            <person name="Nishikawa T."/>
            <person name="Otsuki T."/>
            <person name="Sugiyama T."/>
            <person name="Irie R."/>
            <person name="Wakamatsu A."/>
            <person name="Hayashi K."/>
            <person name="Sato H."/>
            <person name="Nagai K."/>
            <person name="Kimura K."/>
            <person name="Makita H."/>
            <person name="Sekine M."/>
            <person name="Obayashi M."/>
            <person name="Nishi T."/>
            <person name="Shibahara T."/>
            <person name="Tanaka T."/>
            <person name="Ishii S."/>
            <person name="Yamamoto J."/>
            <person name="Saito K."/>
            <person name="Kawai Y."/>
            <person name="Isono Y."/>
            <person name="Nakamura Y."/>
            <person name="Nagahari K."/>
            <person name="Murakami K."/>
            <person name="Yasuda T."/>
            <person name="Iwayanagi T."/>
            <person name="Wagatsuma M."/>
            <person name="Shiratori A."/>
            <person name="Sudo H."/>
            <person name="Hosoiri T."/>
            <person name="Kaku Y."/>
            <person name="Kodaira H."/>
            <person name="Kondo H."/>
            <person name="Sugawara M."/>
            <person name="Takahashi M."/>
            <person name="Kanda K."/>
            <person name="Yokoi T."/>
            <person name="Furuya T."/>
            <person name="Kikkawa E."/>
            <person name="Omura Y."/>
            <person name="Abe K."/>
            <person name="Kamihara K."/>
            <person name="Katsuta N."/>
            <person name="Sato K."/>
            <person name="Tanikawa M."/>
            <person name="Yamazaki M."/>
            <person name="Ninomiya K."/>
            <person name="Ishibashi T."/>
            <person name="Yamashita H."/>
            <person name="Murakawa K."/>
            <person name="Fujimori K."/>
            <person name="Tanai H."/>
            <person name="Kimata M."/>
            <person name="Watanabe M."/>
            <person name="Hiraoka S."/>
            <person name="Chiba Y."/>
            <person name="Ishida S."/>
            <person name="Ono Y."/>
            <person name="Takiguchi S."/>
            <person name="Watanabe S."/>
            <person name="Yosida M."/>
            <person name="Hotuta T."/>
            <person name="Kusano J."/>
            <person name="Kanehori K."/>
            <person name="Takahashi-Fujii A."/>
            <person name="Hara H."/>
            <person name="Tanase T.-O."/>
            <person name="Nomura Y."/>
            <person name="Togiya S."/>
            <person name="Komai F."/>
            <person name="Hara R."/>
            <person name="Takeuchi K."/>
            <person name="Arita M."/>
            <person name="Imose N."/>
            <person name="Musashino K."/>
            <person name="Yuuki H."/>
            <person name="Oshima A."/>
            <person name="Sasaki N."/>
            <person name="Aotsuka S."/>
            <person name="Yoshikawa Y."/>
            <person name="Matsunawa H."/>
            <person name="Ichihara T."/>
            <person name="Shiohata N."/>
            <person name="Sano S."/>
            <person name="Moriya S."/>
            <person name="Momiyama H."/>
            <person name="Satoh N."/>
            <person name="Takami S."/>
            <person name="Terashima Y."/>
            <person name="Suzuki O."/>
            <person name="Nakagawa S."/>
            <person name="Senoh A."/>
            <person name="Mizoguchi H."/>
            <person name="Goto Y."/>
            <person name="Shimizu F."/>
            <person name="Wakebe H."/>
            <person name="Hishigaki H."/>
            <person name="Watanabe T."/>
            <person name="Sugiyama A."/>
            <person name="Takemoto M."/>
            <person name="Kawakami B."/>
            <person name="Yamazaki M."/>
            <person name="Watanabe K."/>
            <person name="Kumagai A."/>
            <person name="Itakura S."/>
            <person name="Fukuzumi Y."/>
            <person name="Fujimori Y."/>
            <person name="Komiyama M."/>
            <person name="Tashiro H."/>
            <person name="Tanigami A."/>
            <person name="Fujiwara T."/>
            <person name="Ono T."/>
            <person name="Yamada K."/>
            <person name="Fujii Y."/>
            <person name="Ozaki K."/>
            <person name="Hirao M."/>
            <person name="Ohmori Y."/>
            <person name="Kawabata A."/>
            <person name="Hikiji T."/>
            <person name="Kobatake N."/>
            <person name="Inagaki H."/>
            <person name="Ikema Y."/>
            <person name="Okamoto S."/>
            <person name="Okitani R."/>
            <person name="Kawakami T."/>
            <person name="Noguchi S."/>
            <person name="Itoh T."/>
            <person name="Shigeta K."/>
            <person name="Senba T."/>
            <person name="Matsumura K."/>
            <person name="Nakajima Y."/>
            <person name="Mizuno T."/>
            <person name="Morinaga M."/>
            <person name="Sasaki M."/>
            <person name="Togashi T."/>
            <person name="Oyama M."/>
            <person name="Hata H."/>
            <person name="Watanabe M."/>
            <person name="Komatsu T."/>
            <person name="Mizushima-Sugano J."/>
            <person name="Satoh T."/>
            <person name="Shirai Y."/>
            <person name="Takahashi Y."/>
            <person name="Nakagawa K."/>
            <person name="Okumura K."/>
            <person name="Nagase T."/>
            <person name="Nomura N."/>
            <person name="Kikuchi H."/>
            <person name="Masuho Y."/>
            <person name="Yamashita R."/>
            <person name="Nakai K."/>
            <person name="Yada T."/>
            <person name="Nakamura Y."/>
            <person name="Ohara O."/>
            <person name="Isogai T."/>
            <person name="Sugano S."/>
        </authorList>
    </citation>
    <scope>NUCLEOTIDE SEQUENCE [LARGE SCALE MRNA] (ISOFORMS 1 AND 2)</scope>
    <source>
        <tissue>Embryo</tissue>
        <tissue>Thyroid</tissue>
    </source>
</reference>
<reference key="3">
    <citation type="journal article" date="2001" name="Nature">
        <title>The DNA sequence and comparative analysis of human chromosome 20.</title>
        <authorList>
            <person name="Deloukas P."/>
            <person name="Matthews L.H."/>
            <person name="Ashurst J.L."/>
            <person name="Burton J."/>
            <person name="Gilbert J.G.R."/>
            <person name="Jones M."/>
            <person name="Stavrides G."/>
            <person name="Almeida J.P."/>
            <person name="Babbage A.K."/>
            <person name="Bagguley C.L."/>
            <person name="Bailey J."/>
            <person name="Barlow K.F."/>
            <person name="Bates K.N."/>
            <person name="Beard L.M."/>
            <person name="Beare D.M."/>
            <person name="Beasley O.P."/>
            <person name="Bird C.P."/>
            <person name="Blakey S.E."/>
            <person name="Bridgeman A.M."/>
            <person name="Brown A.J."/>
            <person name="Buck D."/>
            <person name="Burrill W.D."/>
            <person name="Butler A.P."/>
            <person name="Carder C."/>
            <person name="Carter N.P."/>
            <person name="Chapman J.C."/>
            <person name="Clamp M."/>
            <person name="Clark G."/>
            <person name="Clark L.N."/>
            <person name="Clark S.Y."/>
            <person name="Clee C.M."/>
            <person name="Clegg S."/>
            <person name="Cobley V.E."/>
            <person name="Collier R.E."/>
            <person name="Connor R.E."/>
            <person name="Corby N.R."/>
            <person name="Coulson A."/>
            <person name="Coville G.J."/>
            <person name="Deadman R."/>
            <person name="Dhami P.D."/>
            <person name="Dunn M."/>
            <person name="Ellington A.G."/>
            <person name="Frankland J.A."/>
            <person name="Fraser A."/>
            <person name="French L."/>
            <person name="Garner P."/>
            <person name="Grafham D.V."/>
            <person name="Griffiths C."/>
            <person name="Griffiths M.N.D."/>
            <person name="Gwilliam R."/>
            <person name="Hall R.E."/>
            <person name="Hammond S."/>
            <person name="Harley J.L."/>
            <person name="Heath P.D."/>
            <person name="Ho S."/>
            <person name="Holden J.L."/>
            <person name="Howden P.J."/>
            <person name="Huckle E."/>
            <person name="Hunt A.R."/>
            <person name="Hunt S.E."/>
            <person name="Jekosch K."/>
            <person name="Johnson C.M."/>
            <person name="Johnson D."/>
            <person name="Kay M.P."/>
            <person name="Kimberley A.M."/>
            <person name="King A."/>
            <person name="Knights A."/>
            <person name="Laird G.K."/>
            <person name="Lawlor S."/>
            <person name="Lehvaeslaiho M.H."/>
            <person name="Leversha M.A."/>
            <person name="Lloyd C."/>
            <person name="Lloyd D.M."/>
            <person name="Lovell J.D."/>
            <person name="Marsh V.L."/>
            <person name="Martin S.L."/>
            <person name="McConnachie L.J."/>
            <person name="McLay K."/>
            <person name="McMurray A.A."/>
            <person name="Milne S.A."/>
            <person name="Mistry D."/>
            <person name="Moore M.J.F."/>
            <person name="Mullikin J.C."/>
            <person name="Nickerson T."/>
            <person name="Oliver K."/>
            <person name="Parker A."/>
            <person name="Patel R."/>
            <person name="Pearce T.A.V."/>
            <person name="Peck A.I."/>
            <person name="Phillimore B.J.C.T."/>
            <person name="Prathalingam S.R."/>
            <person name="Plumb R.W."/>
            <person name="Ramsay H."/>
            <person name="Rice C.M."/>
            <person name="Ross M.T."/>
            <person name="Scott C.E."/>
            <person name="Sehra H.K."/>
            <person name="Shownkeen R."/>
            <person name="Sims S."/>
            <person name="Skuce C.D."/>
            <person name="Smith M.L."/>
            <person name="Soderlund C."/>
            <person name="Steward C.A."/>
            <person name="Sulston J.E."/>
            <person name="Swann R.M."/>
            <person name="Sycamore N."/>
            <person name="Taylor R."/>
            <person name="Tee L."/>
            <person name="Thomas D.W."/>
            <person name="Thorpe A."/>
            <person name="Tracey A."/>
            <person name="Tromans A.C."/>
            <person name="Vaudin M."/>
            <person name="Wall M."/>
            <person name="Wallis J.M."/>
            <person name="Whitehead S.L."/>
            <person name="Whittaker P."/>
            <person name="Willey D.L."/>
            <person name="Williams L."/>
            <person name="Williams S.A."/>
            <person name="Wilming L."/>
            <person name="Wray P.W."/>
            <person name="Hubbard T."/>
            <person name="Durbin R.M."/>
            <person name="Bentley D.R."/>
            <person name="Beck S."/>
            <person name="Rogers J."/>
        </authorList>
    </citation>
    <scope>NUCLEOTIDE SEQUENCE [LARGE SCALE GENOMIC DNA]</scope>
</reference>
<reference key="4">
    <citation type="submission" date="2005-09" db="EMBL/GenBank/DDBJ databases">
        <authorList>
            <person name="Mural R.J."/>
            <person name="Istrail S."/>
            <person name="Sutton G.G."/>
            <person name="Florea L."/>
            <person name="Halpern A.L."/>
            <person name="Mobarry C.M."/>
            <person name="Lippert R."/>
            <person name="Walenz B."/>
            <person name="Shatkay H."/>
            <person name="Dew I."/>
            <person name="Miller J.R."/>
            <person name="Flanigan M.J."/>
            <person name="Edwards N.J."/>
            <person name="Bolanos R."/>
            <person name="Fasulo D."/>
            <person name="Halldorsson B.V."/>
            <person name="Hannenhalli S."/>
            <person name="Turner R."/>
            <person name="Yooseph S."/>
            <person name="Lu F."/>
            <person name="Nusskern D.R."/>
            <person name="Shue B.C."/>
            <person name="Zheng X.H."/>
            <person name="Zhong F."/>
            <person name="Delcher A.L."/>
            <person name="Huson D.H."/>
            <person name="Kravitz S.A."/>
            <person name="Mouchard L."/>
            <person name="Reinert K."/>
            <person name="Remington K.A."/>
            <person name="Clark A.G."/>
            <person name="Waterman M.S."/>
            <person name="Eichler E.E."/>
            <person name="Adams M.D."/>
            <person name="Hunkapiller M.W."/>
            <person name="Myers E.W."/>
            <person name="Venter J.C."/>
        </authorList>
    </citation>
    <scope>NUCLEOTIDE SEQUENCE [LARGE SCALE GENOMIC DNA]</scope>
</reference>
<reference key="5">
    <citation type="journal article" date="2004" name="Genome Res.">
        <title>The status, quality, and expansion of the NIH full-length cDNA project: the Mammalian Gene Collection (MGC).</title>
        <authorList>
            <consortium name="The MGC Project Team"/>
        </authorList>
    </citation>
    <scope>NUCLEOTIDE SEQUENCE [LARGE SCALE MRNA] (ISOFORM 1)</scope>
    <source>
        <tissue>Blood</tissue>
    </source>
</reference>
<reference key="6">
    <citation type="journal article" date="2004" name="Nat. Cell Biol.">
        <title>Targeting of the Arf-like GTPase Arl3p to the Golgi requires N-terminal acetylation and the membrane protein Sys1p.</title>
        <authorList>
            <person name="Behnia R."/>
            <person name="Panic B."/>
            <person name="Whyte J.R.C."/>
            <person name="Munro S."/>
        </authorList>
    </citation>
    <scope>SUBCELLULAR LOCATION</scope>
    <scope>INTERACTION WITH ARFRP1</scope>
</reference>
<keyword id="KW-0025">Alternative splicing</keyword>
<keyword id="KW-0333">Golgi apparatus</keyword>
<keyword id="KW-0472">Membrane</keyword>
<keyword id="KW-0653">Protein transport</keyword>
<keyword id="KW-1267">Proteomics identification</keyword>
<keyword id="KW-1185">Reference proteome</keyword>
<keyword id="KW-0812">Transmembrane</keyword>
<keyword id="KW-1133">Transmembrane helix</keyword>
<keyword id="KW-0813">Transport</keyword>
<name>SYS1_HUMAN</name>
<gene>
    <name type="primary">SYS1</name>
    <name type="synonym">C20orf169</name>
</gene>
<protein>
    <recommendedName>
        <fullName>Protein SYS1 homolog</fullName>
    </recommendedName>
</protein>
<organism>
    <name type="scientific">Homo sapiens</name>
    <name type="common">Human</name>
    <dbReference type="NCBI Taxonomy" id="9606"/>
    <lineage>
        <taxon>Eukaryota</taxon>
        <taxon>Metazoa</taxon>
        <taxon>Chordata</taxon>
        <taxon>Craniata</taxon>
        <taxon>Vertebrata</taxon>
        <taxon>Euteleostomi</taxon>
        <taxon>Mammalia</taxon>
        <taxon>Eutheria</taxon>
        <taxon>Euarchontoglires</taxon>
        <taxon>Primates</taxon>
        <taxon>Haplorrhini</taxon>
        <taxon>Catarrhini</taxon>
        <taxon>Hominidae</taxon>
        <taxon>Homo</taxon>
    </lineage>
</organism>